<keyword id="KW-0414">Isoprene biosynthesis</keyword>
<keyword id="KW-0456">Lyase</keyword>
<keyword id="KW-0479">Metal-binding</keyword>
<keyword id="KW-1185">Reference proteome</keyword>
<accession>B4SE23</accession>
<dbReference type="EC" id="4.6.1.12" evidence="1"/>
<dbReference type="EMBL" id="CP001110">
    <property type="protein sequence ID" value="ACF43014.1"/>
    <property type="molecule type" value="Genomic_DNA"/>
</dbReference>
<dbReference type="RefSeq" id="WP_012507509.1">
    <property type="nucleotide sequence ID" value="NC_011060.1"/>
</dbReference>
<dbReference type="SMR" id="B4SE23"/>
<dbReference type="STRING" id="324925.Ppha_0719"/>
<dbReference type="KEGG" id="pph:Ppha_0719"/>
<dbReference type="eggNOG" id="COG0245">
    <property type="taxonomic scope" value="Bacteria"/>
</dbReference>
<dbReference type="HOGENOM" id="CLU_084630_2_0_10"/>
<dbReference type="OrthoDB" id="9804336at2"/>
<dbReference type="UniPathway" id="UPA00056">
    <property type="reaction ID" value="UER00095"/>
</dbReference>
<dbReference type="Proteomes" id="UP000002724">
    <property type="component" value="Chromosome"/>
</dbReference>
<dbReference type="GO" id="GO:0008685">
    <property type="term" value="F:2-C-methyl-D-erythritol 2,4-cyclodiphosphate synthase activity"/>
    <property type="evidence" value="ECO:0007669"/>
    <property type="project" value="UniProtKB-UniRule"/>
</dbReference>
<dbReference type="GO" id="GO:0046872">
    <property type="term" value="F:metal ion binding"/>
    <property type="evidence" value="ECO:0007669"/>
    <property type="project" value="UniProtKB-KW"/>
</dbReference>
<dbReference type="GO" id="GO:0019288">
    <property type="term" value="P:isopentenyl diphosphate biosynthetic process, methylerythritol 4-phosphate pathway"/>
    <property type="evidence" value="ECO:0007669"/>
    <property type="project" value="UniProtKB-UniRule"/>
</dbReference>
<dbReference type="GO" id="GO:0016114">
    <property type="term" value="P:terpenoid biosynthetic process"/>
    <property type="evidence" value="ECO:0007669"/>
    <property type="project" value="InterPro"/>
</dbReference>
<dbReference type="CDD" id="cd00554">
    <property type="entry name" value="MECDP_synthase"/>
    <property type="match status" value="1"/>
</dbReference>
<dbReference type="FunFam" id="3.30.1330.50:FF:000003">
    <property type="entry name" value="2-C-methyl-D-erythritol 2,4-cyclodiphosphate synthase"/>
    <property type="match status" value="1"/>
</dbReference>
<dbReference type="Gene3D" id="3.30.1330.50">
    <property type="entry name" value="2-C-methyl-D-erythritol 2,4-cyclodiphosphate synthase"/>
    <property type="match status" value="1"/>
</dbReference>
<dbReference type="HAMAP" id="MF_00107">
    <property type="entry name" value="IspF"/>
    <property type="match status" value="1"/>
</dbReference>
<dbReference type="InterPro" id="IPR003526">
    <property type="entry name" value="MECDP_synthase"/>
</dbReference>
<dbReference type="InterPro" id="IPR020555">
    <property type="entry name" value="MECDP_synthase_CS"/>
</dbReference>
<dbReference type="InterPro" id="IPR036571">
    <property type="entry name" value="MECDP_synthase_sf"/>
</dbReference>
<dbReference type="NCBIfam" id="TIGR00151">
    <property type="entry name" value="ispF"/>
    <property type="match status" value="1"/>
</dbReference>
<dbReference type="PANTHER" id="PTHR43181">
    <property type="entry name" value="2-C-METHYL-D-ERYTHRITOL 2,4-CYCLODIPHOSPHATE SYNTHASE, CHLOROPLASTIC"/>
    <property type="match status" value="1"/>
</dbReference>
<dbReference type="PANTHER" id="PTHR43181:SF1">
    <property type="entry name" value="2-C-METHYL-D-ERYTHRITOL 2,4-CYCLODIPHOSPHATE SYNTHASE, CHLOROPLASTIC"/>
    <property type="match status" value="1"/>
</dbReference>
<dbReference type="Pfam" id="PF02542">
    <property type="entry name" value="YgbB"/>
    <property type="match status" value="1"/>
</dbReference>
<dbReference type="SUPFAM" id="SSF69765">
    <property type="entry name" value="IpsF-like"/>
    <property type="match status" value="1"/>
</dbReference>
<dbReference type="PROSITE" id="PS01350">
    <property type="entry name" value="ISPF"/>
    <property type="match status" value="1"/>
</dbReference>
<organism>
    <name type="scientific">Pelodictyon phaeoclathratiforme (strain DSM 5477 / BU-1)</name>
    <dbReference type="NCBI Taxonomy" id="324925"/>
    <lineage>
        <taxon>Bacteria</taxon>
        <taxon>Pseudomonadati</taxon>
        <taxon>Chlorobiota</taxon>
        <taxon>Chlorobiia</taxon>
        <taxon>Chlorobiales</taxon>
        <taxon>Chlorobiaceae</taxon>
        <taxon>Chlorobium/Pelodictyon group</taxon>
        <taxon>Pelodictyon</taxon>
    </lineage>
</organism>
<evidence type="ECO:0000255" key="1">
    <source>
        <dbReference type="HAMAP-Rule" id="MF_00107"/>
    </source>
</evidence>
<sequence length="157" mass="16925">MRIGIGIDVHPFAEGRKLVIGGVHIPGHNGLDGHSDADVLLHAVSDALLGAAALGDIGLHFPNTSQEFKDIDSMILLKQVRKLLEKHGYQTVNIDAMLLLEEPKIAPYITGMRKNIARCLDIEIGMVSVKATTNEKLGYIGREEGAAAHAVCIIRSL</sequence>
<protein>
    <recommendedName>
        <fullName evidence="1">2-C-methyl-D-erythritol 2,4-cyclodiphosphate synthase</fullName>
        <shortName evidence="1">MECDP-synthase</shortName>
        <shortName evidence="1">MECPP-synthase</shortName>
        <shortName evidence="1">MECPS</shortName>
        <ecNumber evidence="1">4.6.1.12</ecNumber>
    </recommendedName>
</protein>
<feature type="chain" id="PRO_1000094277" description="2-C-methyl-D-erythritol 2,4-cyclodiphosphate synthase">
    <location>
        <begin position="1"/>
        <end position="157"/>
    </location>
</feature>
<feature type="binding site" evidence="1">
    <location>
        <begin position="8"/>
        <end position="10"/>
    </location>
    <ligand>
        <name>4-CDP-2-C-methyl-D-erythritol 2-phosphate</name>
        <dbReference type="ChEBI" id="CHEBI:57919"/>
    </ligand>
</feature>
<feature type="binding site" evidence="1">
    <location>
        <position position="8"/>
    </location>
    <ligand>
        <name>a divalent metal cation</name>
        <dbReference type="ChEBI" id="CHEBI:60240"/>
    </ligand>
</feature>
<feature type="binding site" evidence="1">
    <location>
        <position position="10"/>
    </location>
    <ligand>
        <name>a divalent metal cation</name>
        <dbReference type="ChEBI" id="CHEBI:60240"/>
    </ligand>
</feature>
<feature type="binding site" evidence="1">
    <location>
        <begin position="34"/>
        <end position="35"/>
    </location>
    <ligand>
        <name>4-CDP-2-C-methyl-D-erythritol 2-phosphate</name>
        <dbReference type="ChEBI" id="CHEBI:57919"/>
    </ligand>
</feature>
<feature type="binding site" evidence="1">
    <location>
        <position position="42"/>
    </location>
    <ligand>
        <name>a divalent metal cation</name>
        <dbReference type="ChEBI" id="CHEBI:60240"/>
    </ligand>
</feature>
<feature type="binding site" evidence="1">
    <location>
        <begin position="56"/>
        <end position="58"/>
    </location>
    <ligand>
        <name>4-CDP-2-C-methyl-D-erythritol 2-phosphate</name>
        <dbReference type="ChEBI" id="CHEBI:57919"/>
    </ligand>
</feature>
<feature type="binding site" evidence="1">
    <location>
        <begin position="132"/>
        <end position="135"/>
    </location>
    <ligand>
        <name>4-CDP-2-C-methyl-D-erythritol 2-phosphate</name>
        <dbReference type="ChEBI" id="CHEBI:57919"/>
    </ligand>
</feature>
<feature type="binding site" evidence="1">
    <location>
        <position position="142"/>
    </location>
    <ligand>
        <name>4-CDP-2-C-methyl-D-erythritol 2-phosphate</name>
        <dbReference type="ChEBI" id="CHEBI:57919"/>
    </ligand>
</feature>
<feature type="site" description="Transition state stabilizer" evidence="1">
    <location>
        <position position="34"/>
    </location>
</feature>
<feature type="site" description="Transition state stabilizer" evidence="1">
    <location>
        <position position="133"/>
    </location>
</feature>
<reference key="1">
    <citation type="submission" date="2008-06" db="EMBL/GenBank/DDBJ databases">
        <title>Complete sequence of Pelodictyon phaeoclathratiforme BU-1.</title>
        <authorList>
            <consortium name="US DOE Joint Genome Institute"/>
            <person name="Lucas S."/>
            <person name="Copeland A."/>
            <person name="Lapidus A."/>
            <person name="Glavina del Rio T."/>
            <person name="Dalin E."/>
            <person name="Tice H."/>
            <person name="Bruce D."/>
            <person name="Goodwin L."/>
            <person name="Pitluck S."/>
            <person name="Schmutz J."/>
            <person name="Larimer F."/>
            <person name="Land M."/>
            <person name="Hauser L."/>
            <person name="Kyrpides N."/>
            <person name="Mikhailova N."/>
            <person name="Liu Z."/>
            <person name="Li T."/>
            <person name="Zhao F."/>
            <person name="Overmann J."/>
            <person name="Bryant D.A."/>
            <person name="Richardson P."/>
        </authorList>
    </citation>
    <scope>NUCLEOTIDE SEQUENCE [LARGE SCALE GENOMIC DNA]</scope>
    <source>
        <strain>DSM 5477 / BU-1</strain>
    </source>
</reference>
<proteinExistence type="inferred from homology"/>
<name>ISPF_PELPB</name>
<gene>
    <name evidence="1" type="primary">ispF</name>
    <name type="ordered locus">Ppha_0719</name>
</gene>
<comment type="function">
    <text evidence="1">Involved in the biosynthesis of isopentenyl diphosphate (IPP) and dimethylallyl diphosphate (DMAPP), two major building blocks of isoprenoid compounds. Catalyzes the conversion of 4-diphosphocytidyl-2-C-methyl-D-erythritol 2-phosphate (CDP-ME2P) to 2-C-methyl-D-erythritol 2,4-cyclodiphosphate (ME-CPP) with a corresponding release of cytidine 5-monophosphate (CMP).</text>
</comment>
<comment type="catalytic activity">
    <reaction evidence="1">
        <text>4-CDP-2-C-methyl-D-erythritol 2-phosphate = 2-C-methyl-D-erythritol 2,4-cyclic diphosphate + CMP</text>
        <dbReference type="Rhea" id="RHEA:23864"/>
        <dbReference type="ChEBI" id="CHEBI:57919"/>
        <dbReference type="ChEBI" id="CHEBI:58483"/>
        <dbReference type="ChEBI" id="CHEBI:60377"/>
        <dbReference type="EC" id="4.6.1.12"/>
    </reaction>
</comment>
<comment type="cofactor">
    <cofactor evidence="1">
        <name>a divalent metal cation</name>
        <dbReference type="ChEBI" id="CHEBI:60240"/>
    </cofactor>
    <text evidence="1">Binds 1 divalent metal cation per subunit.</text>
</comment>
<comment type="pathway">
    <text evidence="1">Isoprenoid biosynthesis; isopentenyl diphosphate biosynthesis via DXP pathway; isopentenyl diphosphate from 1-deoxy-D-xylulose 5-phosphate: step 4/6.</text>
</comment>
<comment type="subunit">
    <text evidence="1">Homotrimer.</text>
</comment>
<comment type="similarity">
    <text evidence="1">Belongs to the IspF family.</text>
</comment>